<feature type="chain" id="PRO_1000115430" description="Homoserine kinase">
    <location>
        <begin position="1"/>
        <end position="331"/>
    </location>
</feature>
<keyword id="KW-0028">Amino-acid biosynthesis</keyword>
<keyword id="KW-0067">ATP-binding</keyword>
<keyword id="KW-0418">Kinase</keyword>
<keyword id="KW-0547">Nucleotide-binding</keyword>
<keyword id="KW-0791">Threonine biosynthesis</keyword>
<keyword id="KW-0808">Transferase</keyword>
<accession>B2T9I7</accession>
<gene>
    <name evidence="1" type="primary">thrB</name>
    <name type="ordered locus">Bphyt_6795</name>
</gene>
<evidence type="ECO:0000255" key="1">
    <source>
        <dbReference type="HAMAP-Rule" id="MF_00301"/>
    </source>
</evidence>
<protein>
    <recommendedName>
        <fullName evidence="1">Homoserine kinase</fullName>
        <shortName evidence="1">HK</shortName>
        <shortName evidence="1">HSK</shortName>
        <ecNumber evidence="1">2.7.1.39</ecNumber>
    </recommendedName>
</protein>
<reference key="1">
    <citation type="journal article" date="2011" name="J. Bacteriol.">
        <title>Complete genome sequence of the plant growth-promoting endophyte Burkholderia phytofirmans strain PsJN.</title>
        <authorList>
            <person name="Weilharter A."/>
            <person name="Mitter B."/>
            <person name="Shin M.V."/>
            <person name="Chain P.S."/>
            <person name="Nowak J."/>
            <person name="Sessitsch A."/>
        </authorList>
    </citation>
    <scope>NUCLEOTIDE SEQUENCE [LARGE SCALE GENOMIC DNA]</scope>
    <source>
        <strain>DSM 17436 / LMG 22146 / PsJN</strain>
    </source>
</reference>
<proteinExistence type="inferred from homology"/>
<sequence length="331" mass="37373">MAVFTAVTEPQLAEWMSHYDLGDVVEFRGISSGIENSNFFLTTTRGEYVLTIFEKLTAEQLPFYLDLMRHLAAHRVPVPDPMPREDGALFGTLHGKPAAIVTKLEGAPELAPGVEHCIEVGQMLARMHLAGRDYTGYQPNLRSLPWWRETVPTILPFLQGEQRELLSSELAHQEAFFASADYAALPEGPCHADLFRDNAMFAHAAPDTGHEVRLGGFFDFYFAGCDKWLFDVAVTVNDWCVDLATGKLDNARTEAMLRAYQTVRPFTAEENRHWGDMLRAGAYRFWVSRLYDFYLPRAAELLKPHDPGHFERILRERLTGVALPGIHTSCN</sequence>
<dbReference type="EC" id="2.7.1.39" evidence="1"/>
<dbReference type="EMBL" id="CP001053">
    <property type="protein sequence ID" value="ACD21089.1"/>
    <property type="molecule type" value="Genomic_DNA"/>
</dbReference>
<dbReference type="RefSeq" id="WP_012428588.1">
    <property type="nucleotide sequence ID" value="NC_010676.1"/>
</dbReference>
<dbReference type="SMR" id="B2T9I7"/>
<dbReference type="STRING" id="398527.Bphyt_6795"/>
<dbReference type="KEGG" id="bpy:Bphyt_6795"/>
<dbReference type="eggNOG" id="COG2334">
    <property type="taxonomic scope" value="Bacteria"/>
</dbReference>
<dbReference type="HOGENOM" id="CLU_053300_0_0_4"/>
<dbReference type="OrthoDB" id="9777460at2"/>
<dbReference type="UniPathway" id="UPA00050">
    <property type="reaction ID" value="UER00064"/>
</dbReference>
<dbReference type="Proteomes" id="UP000001739">
    <property type="component" value="Chromosome 2"/>
</dbReference>
<dbReference type="GO" id="GO:0005524">
    <property type="term" value="F:ATP binding"/>
    <property type="evidence" value="ECO:0007669"/>
    <property type="project" value="UniProtKB-KW"/>
</dbReference>
<dbReference type="GO" id="GO:0004413">
    <property type="term" value="F:homoserine kinase activity"/>
    <property type="evidence" value="ECO:0007669"/>
    <property type="project" value="UniProtKB-UniRule"/>
</dbReference>
<dbReference type="GO" id="GO:0009088">
    <property type="term" value="P:threonine biosynthetic process"/>
    <property type="evidence" value="ECO:0007669"/>
    <property type="project" value="UniProtKB-UniRule"/>
</dbReference>
<dbReference type="CDD" id="cd05153">
    <property type="entry name" value="HomoserineK_II"/>
    <property type="match status" value="1"/>
</dbReference>
<dbReference type="Gene3D" id="3.90.1200.10">
    <property type="match status" value="1"/>
</dbReference>
<dbReference type="Gene3D" id="3.30.200.20">
    <property type="entry name" value="Phosphorylase Kinase, domain 1"/>
    <property type="match status" value="1"/>
</dbReference>
<dbReference type="HAMAP" id="MF_00301">
    <property type="entry name" value="Homoser_kinase_2"/>
    <property type="match status" value="1"/>
</dbReference>
<dbReference type="InterPro" id="IPR002575">
    <property type="entry name" value="Aminoglycoside_PTrfase"/>
</dbReference>
<dbReference type="InterPro" id="IPR005280">
    <property type="entry name" value="Homoserine_kinase_II"/>
</dbReference>
<dbReference type="InterPro" id="IPR011009">
    <property type="entry name" value="Kinase-like_dom_sf"/>
</dbReference>
<dbReference type="InterPro" id="IPR050249">
    <property type="entry name" value="Pseudomonas-type_ThrB"/>
</dbReference>
<dbReference type="NCBIfam" id="NF003558">
    <property type="entry name" value="PRK05231.1"/>
    <property type="match status" value="1"/>
</dbReference>
<dbReference type="NCBIfam" id="TIGR00938">
    <property type="entry name" value="thrB_alt"/>
    <property type="match status" value="1"/>
</dbReference>
<dbReference type="PANTHER" id="PTHR21064:SF6">
    <property type="entry name" value="AMINOGLYCOSIDE PHOSPHOTRANSFERASE DOMAIN-CONTAINING PROTEIN"/>
    <property type="match status" value="1"/>
</dbReference>
<dbReference type="PANTHER" id="PTHR21064">
    <property type="entry name" value="AMINOGLYCOSIDE PHOSPHOTRANSFERASE DOMAIN-CONTAINING PROTEIN-RELATED"/>
    <property type="match status" value="1"/>
</dbReference>
<dbReference type="Pfam" id="PF01636">
    <property type="entry name" value="APH"/>
    <property type="match status" value="1"/>
</dbReference>
<dbReference type="SUPFAM" id="SSF56112">
    <property type="entry name" value="Protein kinase-like (PK-like)"/>
    <property type="match status" value="1"/>
</dbReference>
<name>KHSE_PARPJ</name>
<organism>
    <name type="scientific">Paraburkholderia phytofirmans (strain DSM 17436 / LMG 22146 / PsJN)</name>
    <name type="common">Burkholderia phytofirmans</name>
    <dbReference type="NCBI Taxonomy" id="398527"/>
    <lineage>
        <taxon>Bacteria</taxon>
        <taxon>Pseudomonadati</taxon>
        <taxon>Pseudomonadota</taxon>
        <taxon>Betaproteobacteria</taxon>
        <taxon>Burkholderiales</taxon>
        <taxon>Burkholderiaceae</taxon>
        <taxon>Paraburkholderia</taxon>
    </lineage>
</organism>
<comment type="catalytic activity">
    <reaction evidence="1">
        <text>L-homoserine + ATP = O-phospho-L-homoserine + ADP + H(+)</text>
        <dbReference type="Rhea" id="RHEA:13985"/>
        <dbReference type="ChEBI" id="CHEBI:15378"/>
        <dbReference type="ChEBI" id="CHEBI:30616"/>
        <dbReference type="ChEBI" id="CHEBI:57476"/>
        <dbReference type="ChEBI" id="CHEBI:57590"/>
        <dbReference type="ChEBI" id="CHEBI:456216"/>
        <dbReference type="EC" id="2.7.1.39"/>
    </reaction>
</comment>
<comment type="pathway">
    <text evidence="1">Amino-acid biosynthesis; L-threonine biosynthesis; L-threonine from L-aspartate: step 4/5.</text>
</comment>
<comment type="similarity">
    <text evidence="1">Belongs to the pseudomonas-type ThrB family.</text>
</comment>